<sequence>MPVITLPDGSQRHYDHAVSVLDVALDIGPGLAKACIAGRVNGELVDASDLIESDAQLAIITAKDAEGLEILRHSCAHLLGHAIKQLWPDTKMAIGPVIDNGFYYDVDIEHTLTQEDLALLEKRMHELADKDYDVIKKKVSWQEARDTFAARGEDYKVAILDENISRDDRPGLYHHEEYVDMCRGPHVPNMRFCHHFKLQKTSGAYWRGDSKNKMLQRIYGTAWGDKKQLNAYLQRLEEAAKRDHRKIGKQLDLYHMQEEAPGMVFWHNDGWTIFRELETFVRMKLKEYQYQEVKGPFMMDRVLWEKTGHWENYAEHMFTTSSENREYCIKPMNCPGHVQIFNQGLKSYRDLPLRMAEFGSCHRNEPSGALHGLMRVRGFTQDDAHVFCTEEQVRDEVNSCIKMVYDMYSTFGFEKIVVKLSTRPEKRIGSDELWTRAEDDLAAALTENGIPFDYQPGEGAFYGPKIEFTLHDCLDRAWQCGTVQLDFSLPGRLSASYIGENNDRQVPVMIHRAILGSMERFIGILTEEYAGFFPTWLAPVQVVVMNITDSQSDYVQQVTKKLQDAGIRAKADLRNEKIGFKIREHTLRRVPYMLVCGDKEVESGKIAVRTRRGKDLGSLDVNVVVDQLLAEIRSRSLHQLEE</sequence>
<proteinExistence type="inferred from homology"/>
<accession>Q8ZDW5</accession>
<accession>Q0WE91</accession>
<protein>
    <recommendedName>
        <fullName evidence="1">Threonine--tRNA ligase</fullName>
        <ecNumber evidence="1">6.1.1.3</ecNumber>
    </recommendedName>
    <alternativeName>
        <fullName evidence="1">Threonyl-tRNA synthetase</fullName>
        <shortName evidence="1">ThrRS</shortName>
    </alternativeName>
</protein>
<name>SYT_YERPE</name>
<organism>
    <name type="scientific">Yersinia pestis</name>
    <dbReference type="NCBI Taxonomy" id="632"/>
    <lineage>
        <taxon>Bacteria</taxon>
        <taxon>Pseudomonadati</taxon>
        <taxon>Pseudomonadota</taxon>
        <taxon>Gammaproteobacteria</taxon>
        <taxon>Enterobacterales</taxon>
        <taxon>Yersiniaceae</taxon>
        <taxon>Yersinia</taxon>
    </lineage>
</organism>
<evidence type="ECO:0000255" key="1">
    <source>
        <dbReference type="HAMAP-Rule" id="MF_00184"/>
    </source>
</evidence>
<evidence type="ECO:0000255" key="2">
    <source>
        <dbReference type="PROSITE-ProRule" id="PRU01228"/>
    </source>
</evidence>
<reference key="1">
    <citation type="journal article" date="2001" name="Nature">
        <title>Genome sequence of Yersinia pestis, the causative agent of plague.</title>
        <authorList>
            <person name="Parkhill J."/>
            <person name="Wren B.W."/>
            <person name="Thomson N.R."/>
            <person name="Titball R.W."/>
            <person name="Holden M.T.G."/>
            <person name="Prentice M.B."/>
            <person name="Sebaihia M."/>
            <person name="James K.D."/>
            <person name="Churcher C.M."/>
            <person name="Mungall K.L."/>
            <person name="Baker S."/>
            <person name="Basham D."/>
            <person name="Bentley S.D."/>
            <person name="Brooks K."/>
            <person name="Cerdeno-Tarraga A.-M."/>
            <person name="Chillingworth T."/>
            <person name="Cronin A."/>
            <person name="Davies R.M."/>
            <person name="Davis P."/>
            <person name="Dougan G."/>
            <person name="Feltwell T."/>
            <person name="Hamlin N."/>
            <person name="Holroyd S."/>
            <person name="Jagels K."/>
            <person name="Karlyshev A.V."/>
            <person name="Leather S."/>
            <person name="Moule S."/>
            <person name="Oyston P.C.F."/>
            <person name="Quail M.A."/>
            <person name="Rutherford K.M."/>
            <person name="Simmonds M."/>
            <person name="Skelton J."/>
            <person name="Stevens K."/>
            <person name="Whitehead S."/>
            <person name="Barrell B.G."/>
        </authorList>
    </citation>
    <scope>NUCLEOTIDE SEQUENCE [LARGE SCALE GENOMIC DNA]</scope>
    <source>
        <strain>CO-92 / Biovar Orientalis</strain>
    </source>
</reference>
<reference key="2">
    <citation type="journal article" date="2002" name="J. Bacteriol.">
        <title>Genome sequence of Yersinia pestis KIM.</title>
        <authorList>
            <person name="Deng W."/>
            <person name="Burland V."/>
            <person name="Plunkett G. III"/>
            <person name="Boutin A."/>
            <person name="Mayhew G.F."/>
            <person name="Liss P."/>
            <person name="Perna N.T."/>
            <person name="Rose D.J."/>
            <person name="Mau B."/>
            <person name="Zhou S."/>
            <person name="Schwartz D.C."/>
            <person name="Fetherston J.D."/>
            <person name="Lindler L.E."/>
            <person name="Brubaker R.R."/>
            <person name="Plano G.V."/>
            <person name="Straley S.C."/>
            <person name="McDonough K.A."/>
            <person name="Nilles M.L."/>
            <person name="Matson J.S."/>
            <person name="Blattner F.R."/>
            <person name="Perry R.D."/>
        </authorList>
    </citation>
    <scope>NUCLEOTIDE SEQUENCE [LARGE SCALE GENOMIC DNA]</scope>
    <source>
        <strain>KIM10+ / Biovar Mediaevalis</strain>
    </source>
</reference>
<reference key="3">
    <citation type="journal article" date="2004" name="DNA Res.">
        <title>Complete genome sequence of Yersinia pestis strain 91001, an isolate avirulent to humans.</title>
        <authorList>
            <person name="Song Y."/>
            <person name="Tong Z."/>
            <person name="Wang J."/>
            <person name="Wang L."/>
            <person name="Guo Z."/>
            <person name="Han Y."/>
            <person name="Zhang J."/>
            <person name="Pei D."/>
            <person name="Zhou D."/>
            <person name="Qin H."/>
            <person name="Pang X."/>
            <person name="Han Y."/>
            <person name="Zhai J."/>
            <person name="Li M."/>
            <person name="Cui B."/>
            <person name="Qi Z."/>
            <person name="Jin L."/>
            <person name="Dai R."/>
            <person name="Chen F."/>
            <person name="Li S."/>
            <person name="Ye C."/>
            <person name="Du Z."/>
            <person name="Lin W."/>
            <person name="Wang J."/>
            <person name="Yu J."/>
            <person name="Yang H."/>
            <person name="Wang J."/>
            <person name="Huang P."/>
            <person name="Yang R."/>
        </authorList>
    </citation>
    <scope>NUCLEOTIDE SEQUENCE [LARGE SCALE GENOMIC DNA]</scope>
    <source>
        <strain>91001 / Biovar Mediaevalis</strain>
    </source>
</reference>
<feature type="chain" id="PRO_0000101094" description="Threonine--tRNA ligase">
    <location>
        <begin position="1"/>
        <end position="642"/>
    </location>
</feature>
<feature type="domain" description="TGS" evidence="2">
    <location>
        <begin position="1"/>
        <end position="61"/>
    </location>
</feature>
<feature type="region of interest" description="Catalytic" evidence="1">
    <location>
        <begin position="243"/>
        <end position="534"/>
    </location>
</feature>
<feature type="binding site" evidence="1">
    <location>
        <position position="334"/>
    </location>
    <ligand>
        <name>Zn(2+)</name>
        <dbReference type="ChEBI" id="CHEBI:29105"/>
    </ligand>
</feature>
<feature type="binding site" evidence="1">
    <location>
        <position position="385"/>
    </location>
    <ligand>
        <name>Zn(2+)</name>
        <dbReference type="ChEBI" id="CHEBI:29105"/>
    </ligand>
</feature>
<feature type="binding site" evidence="1">
    <location>
        <position position="511"/>
    </location>
    <ligand>
        <name>Zn(2+)</name>
        <dbReference type="ChEBI" id="CHEBI:29105"/>
    </ligand>
</feature>
<keyword id="KW-0030">Aminoacyl-tRNA synthetase</keyword>
<keyword id="KW-0067">ATP-binding</keyword>
<keyword id="KW-0963">Cytoplasm</keyword>
<keyword id="KW-0436">Ligase</keyword>
<keyword id="KW-0479">Metal-binding</keyword>
<keyword id="KW-0547">Nucleotide-binding</keyword>
<keyword id="KW-0648">Protein biosynthesis</keyword>
<keyword id="KW-1185">Reference proteome</keyword>
<keyword id="KW-0694">RNA-binding</keyword>
<keyword id="KW-0820">tRNA-binding</keyword>
<keyword id="KW-0862">Zinc</keyword>
<comment type="function">
    <text evidence="1">Catalyzes the attachment of threonine to tRNA(Thr) in a two-step reaction: L-threonine is first activated by ATP to form Thr-AMP and then transferred to the acceptor end of tRNA(Thr). Also edits incorrectly charged L-seryl-tRNA(Thr).</text>
</comment>
<comment type="catalytic activity">
    <reaction evidence="1">
        <text>tRNA(Thr) + L-threonine + ATP = L-threonyl-tRNA(Thr) + AMP + diphosphate + H(+)</text>
        <dbReference type="Rhea" id="RHEA:24624"/>
        <dbReference type="Rhea" id="RHEA-COMP:9670"/>
        <dbReference type="Rhea" id="RHEA-COMP:9704"/>
        <dbReference type="ChEBI" id="CHEBI:15378"/>
        <dbReference type="ChEBI" id="CHEBI:30616"/>
        <dbReference type="ChEBI" id="CHEBI:33019"/>
        <dbReference type="ChEBI" id="CHEBI:57926"/>
        <dbReference type="ChEBI" id="CHEBI:78442"/>
        <dbReference type="ChEBI" id="CHEBI:78534"/>
        <dbReference type="ChEBI" id="CHEBI:456215"/>
        <dbReference type="EC" id="6.1.1.3"/>
    </reaction>
</comment>
<comment type="cofactor">
    <cofactor evidence="1">
        <name>Zn(2+)</name>
        <dbReference type="ChEBI" id="CHEBI:29105"/>
    </cofactor>
    <text evidence="1">Binds 1 zinc ion per subunit.</text>
</comment>
<comment type="subunit">
    <text evidence="1">Homodimer.</text>
</comment>
<comment type="subcellular location">
    <subcellularLocation>
        <location evidence="1">Cytoplasm</location>
    </subcellularLocation>
</comment>
<comment type="similarity">
    <text evidence="1">Belongs to the class-II aminoacyl-tRNA synthetase family.</text>
</comment>
<dbReference type="EC" id="6.1.1.3" evidence="1"/>
<dbReference type="EMBL" id="AL590842">
    <property type="protein sequence ID" value="CAL21061.1"/>
    <property type="molecule type" value="Genomic_DNA"/>
</dbReference>
<dbReference type="EMBL" id="AE009952">
    <property type="protein sequence ID" value="AAM85470.1"/>
    <property type="molecule type" value="Genomic_DNA"/>
</dbReference>
<dbReference type="EMBL" id="AE017042">
    <property type="protein sequence ID" value="AAS62427.1"/>
    <property type="molecule type" value="Genomic_DNA"/>
</dbReference>
<dbReference type="PIR" id="AB0297">
    <property type="entry name" value="AB0297"/>
</dbReference>
<dbReference type="RefSeq" id="WP_002211836.1">
    <property type="nucleotide sequence ID" value="NZ_WUCM01000025.1"/>
</dbReference>
<dbReference type="RefSeq" id="YP_002347397.1">
    <property type="nucleotide sequence ID" value="NC_003143.1"/>
</dbReference>
<dbReference type="SMR" id="Q8ZDW5"/>
<dbReference type="IntAct" id="Q8ZDW5">
    <property type="interactions" value="1"/>
</dbReference>
<dbReference type="STRING" id="214092.YPO2433"/>
<dbReference type="BindingDB" id="Q8ZDW5"/>
<dbReference type="ChEMBL" id="CHEMBL2311235"/>
<dbReference type="PaxDb" id="214092-YPO2433"/>
<dbReference type="DNASU" id="1146850"/>
<dbReference type="EnsemblBacteria" id="AAS62427">
    <property type="protein sequence ID" value="AAS62427"/>
    <property type="gene ID" value="YP_2221"/>
</dbReference>
<dbReference type="GeneID" id="57976245"/>
<dbReference type="KEGG" id="ype:YPO2433"/>
<dbReference type="KEGG" id="ypk:y1903"/>
<dbReference type="KEGG" id="ypm:YP_2221"/>
<dbReference type="PATRIC" id="fig|214092.21.peg.2842"/>
<dbReference type="eggNOG" id="COG0441">
    <property type="taxonomic scope" value="Bacteria"/>
</dbReference>
<dbReference type="HOGENOM" id="CLU_008554_0_1_6"/>
<dbReference type="OMA" id="WYADGMY"/>
<dbReference type="OrthoDB" id="9802304at2"/>
<dbReference type="PRO" id="PR:Q8ZDW5"/>
<dbReference type="Proteomes" id="UP000000815">
    <property type="component" value="Chromosome"/>
</dbReference>
<dbReference type="Proteomes" id="UP000001019">
    <property type="component" value="Chromosome"/>
</dbReference>
<dbReference type="Proteomes" id="UP000002490">
    <property type="component" value="Chromosome"/>
</dbReference>
<dbReference type="GO" id="GO:0005829">
    <property type="term" value="C:cytosol"/>
    <property type="evidence" value="ECO:0000318"/>
    <property type="project" value="GO_Central"/>
</dbReference>
<dbReference type="GO" id="GO:0005524">
    <property type="term" value="F:ATP binding"/>
    <property type="evidence" value="ECO:0007669"/>
    <property type="project" value="UniProtKB-UniRule"/>
</dbReference>
<dbReference type="GO" id="GO:0046872">
    <property type="term" value="F:metal ion binding"/>
    <property type="evidence" value="ECO:0007669"/>
    <property type="project" value="UniProtKB-KW"/>
</dbReference>
<dbReference type="GO" id="GO:0004829">
    <property type="term" value="F:threonine-tRNA ligase activity"/>
    <property type="evidence" value="ECO:0000318"/>
    <property type="project" value="GO_Central"/>
</dbReference>
<dbReference type="GO" id="GO:0000049">
    <property type="term" value="F:tRNA binding"/>
    <property type="evidence" value="ECO:0007669"/>
    <property type="project" value="UniProtKB-KW"/>
</dbReference>
<dbReference type="GO" id="GO:0006435">
    <property type="term" value="P:threonyl-tRNA aminoacylation"/>
    <property type="evidence" value="ECO:0000318"/>
    <property type="project" value="GO_Central"/>
</dbReference>
<dbReference type="CDD" id="cd01667">
    <property type="entry name" value="TGS_ThrRS"/>
    <property type="match status" value="1"/>
</dbReference>
<dbReference type="CDD" id="cd00860">
    <property type="entry name" value="ThrRS_anticodon"/>
    <property type="match status" value="1"/>
</dbReference>
<dbReference type="CDD" id="cd00771">
    <property type="entry name" value="ThrRS_core"/>
    <property type="match status" value="1"/>
</dbReference>
<dbReference type="FunFam" id="3.10.20.30:FF:000005">
    <property type="entry name" value="Threonine--tRNA ligase"/>
    <property type="match status" value="1"/>
</dbReference>
<dbReference type="FunFam" id="3.30.54.20:FF:000002">
    <property type="entry name" value="Threonine--tRNA ligase"/>
    <property type="match status" value="1"/>
</dbReference>
<dbReference type="FunFam" id="3.30.930.10:FF:000002">
    <property type="entry name" value="Threonine--tRNA ligase"/>
    <property type="match status" value="1"/>
</dbReference>
<dbReference type="FunFam" id="3.40.50.800:FF:000001">
    <property type="entry name" value="Threonine--tRNA ligase"/>
    <property type="match status" value="1"/>
</dbReference>
<dbReference type="FunFam" id="3.30.980.10:FF:000005">
    <property type="entry name" value="Threonyl-tRNA synthetase, mitochondrial"/>
    <property type="match status" value="1"/>
</dbReference>
<dbReference type="Gene3D" id="3.10.20.30">
    <property type="match status" value="1"/>
</dbReference>
<dbReference type="Gene3D" id="3.30.54.20">
    <property type="match status" value="1"/>
</dbReference>
<dbReference type="Gene3D" id="3.40.50.800">
    <property type="entry name" value="Anticodon-binding domain"/>
    <property type="match status" value="1"/>
</dbReference>
<dbReference type="Gene3D" id="3.30.930.10">
    <property type="entry name" value="Bira Bifunctional Protein, Domain 2"/>
    <property type="match status" value="1"/>
</dbReference>
<dbReference type="Gene3D" id="3.30.980.10">
    <property type="entry name" value="Threonyl-trna Synthetase, Chain A, domain 2"/>
    <property type="match status" value="1"/>
</dbReference>
<dbReference type="HAMAP" id="MF_00184">
    <property type="entry name" value="Thr_tRNA_synth"/>
    <property type="match status" value="1"/>
</dbReference>
<dbReference type="InterPro" id="IPR002314">
    <property type="entry name" value="aa-tRNA-synt_IIb"/>
</dbReference>
<dbReference type="InterPro" id="IPR006195">
    <property type="entry name" value="aa-tRNA-synth_II"/>
</dbReference>
<dbReference type="InterPro" id="IPR045864">
    <property type="entry name" value="aa-tRNA-synth_II/BPL/LPL"/>
</dbReference>
<dbReference type="InterPro" id="IPR004154">
    <property type="entry name" value="Anticodon-bd"/>
</dbReference>
<dbReference type="InterPro" id="IPR036621">
    <property type="entry name" value="Anticodon-bd_dom_sf"/>
</dbReference>
<dbReference type="InterPro" id="IPR012675">
    <property type="entry name" value="Beta-grasp_dom_sf"/>
</dbReference>
<dbReference type="InterPro" id="IPR004095">
    <property type="entry name" value="TGS"/>
</dbReference>
<dbReference type="InterPro" id="IPR012676">
    <property type="entry name" value="TGS-like"/>
</dbReference>
<dbReference type="InterPro" id="IPR002320">
    <property type="entry name" value="Thr-tRNA-ligase_IIa"/>
</dbReference>
<dbReference type="InterPro" id="IPR018163">
    <property type="entry name" value="Thr/Ala-tRNA-synth_IIc_edit"/>
</dbReference>
<dbReference type="InterPro" id="IPR047246">
    <property type="entry name" value="ThrRS_anticodon"/>
</dbReference>
<dbReference type="InterPro" id="IPR033728">
    <property type="entry name" value="ThrRS_core"/>
</dbReference>
<dbReference type="InterPro" id="IPR012947">
    <property type="entry name" value="tRNA_SAD"/>
</dbReference>
<dbReference type="NCBIfam" id="TIGR00418">
    <property type="entry name" value="thrS"/>
    <property type="match status" value="1"/>
</dbReference>
<dbReference type="PANTHER" id="PTHR11451:SF44">
    <property type="entry name" value="THREONINE--TRNA LIGASE, CHLOROPLASTIC_MITOCHONDRIAL 2"/>
    <property type="match status" value="1"/>
</dbReference>
<dbReference type="PANTHER" id="PTHR11451">
    <property type="entry name" value="THREONINE-TRNA LIGASE"/>
    <property type="match status" value="1"/>
</dbReference>
<dbReference type="Pfam" id="PF03129">
    <property type="entry name" value="HGTP_anticodon"/>
    <property type="match status" value="1"/>
</dbReference>
<dbReference type="Pfam" id="PF02824">
    <property type="entry name" value="TGS"/>
    <property type="match status" value="1"/>
</dbReference>
<dbReference type="Pfam" id="PF00587">
    <property type="entry name" value="tRNA-synt_2b"/>
    <property type="match status" value="1"/>
</dbReference>
<dbReference type="Pfam" id="PF07973">
    <property type="entry name" value="tRNA_SAD"/>
    <property type="match status" value="1"/>
</dbReference>
<dbReference type="PRINTS" id="PR01047">
    <property type="entry name" value="TRNASYNTHTHR"/>
</dbReference>
<dbReference type="SMART" id="SM00863">
    <property type="entry name" value="tRNA_SAD"/>
    <property type="match status" value="1"/>
</dbReference>
<dbReference type="SUPFAM" id="SSF52954">
    <property type="entry name" value="Class II aaRS ABD-related"/>
    <property type="match status" value="1"/>
</dbReference>
<dbReference type="SUPFAM" id="SSF55681">
    <property type="entry name" value="Class II aaRS and biotin synthetases"/>
    <property type="match status" value="1"/>
</dbReference>
<dbReference type="SUPFAM" id="SSF81271">
    <property type="entry name" value="TGS-like"/>
    <property type="match status" value="1"/>
</dbReference>
<dbReference type="SUPFAM" id="SSF55186">
    <property type="entry name" value="ThrRS/AlaRS common domain"/>
    <property type="match status" value="1"/>
</dbReference>
<dbReference type="PROSITE" id="PS50862">
    <property type="entry name" value="AA_TRNA_LIGASE_II"/>
    <property type="match status" value="1"/>
</dbReference>
<dbReference type="PROSITE" id="PS51880">
    <property type="entry name" value="TGS"/>
    <property type="match status" value="1"/>
</dbReference>
<gene>
    <name evidence="1" type="primary">thrS</name>
    <name type="ordered locus">YPO2433</name>
    <name type="ordered locus">y1903</name>
    <name type="ordered locus">YP_2221</name>
</gene>